<proteinExistence type="evidence at transcript level"/>
<dbReference type="EMBL" id="CR926175">
    <property type="protein sequence ID" value="CAJ83307.1"/>
    <property type="molecule type" value="mRNA"/>
</dbReference>
<dbReference type="RefSeq" id="NP_001016532.1">
    <property type="nucleotide sequence ID" value="NM_001016532.2"/>
</dbReference>
<dbReference type="SMR" id="Q28CV2"/>
<dbReference type="FunCoup" id="Q28CV2">
    <property type="interactions" value="1391"/>
</dbReference>
<dbReference type="STRING" id="8364.ENSXETP00000043797"/>
<dbReference type="PaxDb" id="8364-ENSXETP00000015464"/>
<dbReference type="GeneID" id="549286"/>
<dbReference type="KEGG" id="xtr:549286"/>
<dbReference type="AGR" id="Xenbase:XB-GENE-1016397"/>
<dbReference type="CTD" id="55751"/>
<dbReference type="Xenbase" id="XB-GENE-1016397">
    <property type="gene designation" value="tmem184c"/>
</dbReference>
<dbReference type="eggNOG" id="KOG2641">
    <property type="taxonomic scope" value="Eukaryota"/>
</dbReference>
<dbReference type="HOGENOM" id="CLU_012923_1_1_1"/>
<dbReference type="InParanoid" id="Q28CV2"/>
<dbReference type="OMA" id="AHAFVFN"/>
<dbReference type="OrthoDB" id="5348404at2759"/>
<dbReference type="PhylomeDB" id="Q28CV2"/>
<dbReference type="TreeFam" id="TF324245"/>
<dbReference type="Proteomes" id="UP000008143">
    <property type="component" value="Chromosome 1"/>
</dbReference>
<dbReference type="GO" id="GO:0016020">
    <property type="term" value="C:membrane"/>
    <property type="evidence" value="ECO:0007669"/>
    <property type="project" value="UniProtKB-SubCell"/>
</dbReference>
<dbReference type="InterPro" id="IPR005178">
    <property type="entry name" value="Ostalpha/TMEM184C"/>
</dbReference>
<dbReference type="PANTHER" id="PTHR23423">
    <property type="entry name" value="ORGANIC SOLUTE TRANSPORTER-RELATED"/>
    <property type="match status" value="1"/>
</dbReference>
<dbReference type="Pfam" id="PF03619">
    <property type="entry name" value="Solute_trans_a"/>
    <property type="match status" value="1"/>
</dbReference>
<dbReference type="SMART" id="SM01417">
    <property type="entry name" value="Solute_trans_a"/>
    <property type="match status" value="1"/>
</dbReference>
<sequence length="443" mass="50261">MPCTCGNWRRWIRPLVVLLYIVGLIVGVPICIWKLQKMEVGVHTKAWFIAGIFVLMTIPISLWGILQHLVHYTQPELQKPIIRILWMVPIYSVDSWIALKYPDIAIYVDTCRECYEAYVIYNFMIFLLNYLTNRCPNLALVLEAKDQQRHLPPLCCCPPWAMGDVLLFRCKLGVLQYTVVRPVTTVIALICQLTGVYGEGDFSVKNAWTYLVIINNVSQVFAMYCLVLFYKVLKEELNPIQPVGKFLCVKMVVFVSFWQAVFIAILVKAGVISNTWEWKKVQDVATGLQDFIICVEMFLAAVAHHFSFTYKPYVQEAEEGSCFDSFLAMWDISDIRADISEQVRNVGRTVLGRPRKMFFNDDLEQNEHTSLLSSSTQDPISAASSIPPSPSGHYQGFGQTITPQTTPTATTMPEELYSADSPEADLVADHSKVPDESCNHLDS</sequence>
<organism>
    <name type="scientific">Xenopus tropicalis</name>
    <name type="common">Western clawed frog</name>
    <name type="synonym">Silurana tropicalis</name>
    <dbReference type="NCBI Taxonomy" id="8364"/>
    <lineage>
        <taxon>Eukaryota</taxon>
        <taxon>Metazoa</taxon>
        <taxon>Chordata</taxon>
        <taxon>Craniata</taxon>
        <taxon>Vertebrata</taxon>
        <taxon>Euteleostomi</taxon>
        <taxon>Amphibia</taxon>
        <taxon>Batrachia</taxon>
        <taxon>Anura</taxon>
        <taxon>Pipoidea</taxon>
        <taxon>Pipidae</taxon>
        <taxon>Xenopodinae</taxon>
        <taxon>Xenopus</taxon>
        <taxon>Silurana</taxon>
    </lineage>
</organism>
<protein>
    <recommendedName>
        <fullName>Transmembrane protein 184C</fullName>
    </recommendedName>
    <alternativeName>
        <fullName>Transmembrane protein 34</fullName>
    </alternativeName>
</protein>
<reference key="1">
    <citation type="submission" date="2006-10" db="EMBL/GenBank/DDBJ databases">
        <authorList>
            <consortium name="Sanger Xenopus tropicalis EST/cDNA project"/>
        </authorList>
    </citation>
    <scope>NUCLEOTIDE SEQUENCE [LARGE SCALE MRNA]</scope>
    <source>
        <tissue>Neurula</tissue>
    </source>
</reference>
<feature type="chain" id="PRO_0000287573" description="Transmembrane protein 184C">
    <location>
        <begin position="1"/>
        <end position="443"/>
    </location>
</feature>
<feature type="transmembrane region" description="Helical" evidence="2">
    <location>
        <begin position="15"/>
        <end position="35"/>
    </location>
</feature>
<feature type="transmembrane region" description="Helical" evidence="2">
    <location>
        <begin position="46"/>
        <end position="66"/>
    </location>
</feature>
<feature type="transmembrane region" description="Helical" evidence="2">
    <location>
        <begin position="84"/>
        <end position="104"/>
    </location>
</feature>
<feature type="transmembrane region" description="Helical" evidence="2">
    <location>
        <begin position="182"/>
        <end position="202"/>
    </location>
</feature>
<feature type="transmembrane region" description="Helical" evidence="2">
    <location>
        <begin position="210"/>
        <end position="230"/>
    </location>
</feature>
<feature type="transmembrane region" description="Helical" evidence="2">
    <location>
        <begin position="252"/>
        <end position="272"/>
    </location>
</feature>
<feature type="transmembrane region" description="Helical" evidence="2">
    <location>
        <begin position="284"/>
        <end position="304"/>
    </location>
</feature>
<feature type="region of interest" description="Disordered" evidence="3">
    <location>
        <begin position="369"/>
        <end position="422"/>
    </location>
</feature>
<feature type="compositionally biased region" description="Polar residues" evidence="3">
    <location>
        <begin position="369"/>
        <end position="378"/>
    </location>
</feature>
<feature type="compositionally biased region" description="Low complexity" evidence="3">
    <location>
        <begin position="399"/>
        <end position="411"/>
    </location>
</feature>
<comment type="function">
    <text evidence="1">May play a role in cell growth.</text>
</comment>
<comment type="subcellular location">
    <subcellularLocation>
        <location evidence="4">Membrane</location>
        <topology evidence="4">Multi-pass membrane protein</topology>
    </subcellularLocation>
</comment>
<comment type="similarity">
    <text evidence="4">Belongs to the TMEM184 family.</text>
</comment>
<evidence type="ECO:0000250" key="1"/>
<evidence type="ECO:0000255" key="2"/>
<evidence type="ECO:0000256" key="3">
    <source>
        <dbReference type="SAM" id="MobiDB-lite"/>
    </source>
</evidence>
<evidence type="ECO:0000305" key="4"/>
<gene>
    <name type="primary">tmem184c</name>
    <name type="synonym">tmem34</name>
</gene>
<name>T184C_XENTR</name>
<keyword id="KW-0472">Membrane</keyword>
<keyword id="KW-1185">Reference proteome</keyword>
<keyword id="KW-0812">Transmembrane</keyword>
<keyword id="KW-1133">Transmembrane helix</keyword>
<accession>Q28CV2</accession>